<protein>
    <recommendedName>
        <fullName evidence="1">Argininosuccinate synthase</fullName>
        <ecNumber evidence="1">6.3.4.5</ecNumber>
    </recommendedName>
    <alternativeName>
        <fullName evidence="1">Citrulline--aspartate ligase</fullName>
    </alternativeName>
</protein>
<evidence type="ECO:0000255" key="1">
    <source>
        <dbReference type="HAMAP-Rule" id="MF_00005"/>
    </source>
</evidence>
<gene>
    <name evidence="1" type="primary">argG</name>
</gene>
<sequence>MKMTQTVKKVVVAYSGGLDTSVILPWLQENYDNCEIVAFVADVGQGAEELEGIEAKALASGASECYVVDLKDELVENYIYPTLKTGAVYEGTYLLGTSMARPIIAKAQVEIARKVGADALCHGCTGKGNDQIRFESCFAALAPELTVIAPWRIWDLTSRESLLEYLAERDIPTAASATKIYSRDANAWHISHEGGELEDPWNQPSKQVWTMTVDPIDAPNEPEFLTISVVKGEITAVNGEAMSPYNTLMYLNEKAAAHGVGRVDIVENRLVGMKSRGCYETPGGTVMVEALRGIEELVLDKTTRKWKQTVAAEFSHLVYDGRWFTPLCASLLAAAGTLAEEMNGEVIVKMYKGSVQAIQKKSPNSLYSEEFATFGDDNVYDQSHAEGFIRLYSLSSRIKALASK</sequence>
<organism>
    <name type="scientific">Moritella profunda</name>
    <dbReference type="NCBI Taxonomy" id="111291"/>
    <lineage>
        <taxon>Bacteria</taxon>
        <taxon>Pseudomonadati</taxon>
        <taxon>Pseudomonadota</taxon>
        <taxon>Gammaproteobacteria</taxon>
        <taxon>Alteromonadales</taxon>
        <taxon>Moritellaceae</taxon>
        <taxon>Moritella</taxon>
    </lineage>
</organism>
<feature type="chain" id="PRO_0000148613" description="Argininosuccinate synthase">
    <location>
        <begin position="1"/>
        <end position="404"/>
    </location>
</feature>
<feature type="binding site" evidence="1">
    <location>
        <begin position="13"/>
        <end position="21"/>
    </location>
    <ligand>
        <name>ATP</name>
        <dbReference type="ChEBI" id="CHEBI:30616"/>
    </ligand>
</feature>
<feature type="binding site" evidence="1">
    <location>
        <position position="41"/>
    </location>
    <ligand>
        <name>ATP</name>
        <dbReference type="ChEBI" id="CHEBI:30616"/>
    </ligand>
</feature>
<feature type="binding site" evidence="1">
    <location>
        <position position="93"/>
    </location>
    <ligand>
        <name>L-citrulline</name>
        <dbReference type="ChEBI" id="CHEBI:57743"/>
    </ligand>
</feature>
<feature type="binding site" evidence="1">
    <location>
        <position position="98"/>
    </location>
    <ligand>
        <name>L-citrulline</name>
        <dbReference type="ChEBI" id="CHEBI:57743"/>
    </ligand>
</feature>
<feature type="binding site" evidence="1">
    <location>
        <position position="123"/>
    </location>
    <ligand>
        <name>ATP</name>
        <dbReference type="ChEBI" id="CHEBI:30616"/>
    </ligand>
</feature>
<feature type="binding site" evidence="1">
    <location>
        <position position="125"/>
    </location>
    <ligand>
        <name>L-aspartate</name>
        <dbReference type="ChEBI" id="CHEBI:29991"/>
    </ligand>
</feature>
<feature type="binding site" evidence="1">
    <location>
        <position position="129"/>
    </location>
    <ligand>
        <name>L-aspartate</name>
        <dbReference type="ChEBI" id="CHEBI:29991"/>
    </ligand>
</feature>
<feature type="binding site" evidence="1">
    <location>
        <position position="129"/>
    </location>
    <ligand>
        <name>L-citrulline</name>
        <dbReference type="ChEBI" id="CHEBI:57743"/>
    </ligand>
</feature>
<feature type="binding site" evidence="1">
    <location>
        <position position="130"/>
    </location>
    <ligand>
        <name>L-aspartate</name>
        <dbReference type="ChEBI" id="CHEBI:29991"/>
    </ligand>
</feature>
<feature type="binding site" evidence="1">
    <location>
        <position position="133"/>
    </location>
    <ligand>
        <name>L-citrulline</name>
        <dbReference type="ChEBI" id="CHEBI:57743"/>
    </ligand>
</feature>
<feature type="binding site" evidence="1">
    <location>
        <position position="182"/>
    </location>
    <ligand>
        <name>L-citrulline</name>
        <dbReference type="ChEBI" id="CHEBI:57743"/>
    </ligand>
</feature>
<feature type="binding site" evidence="1">
    <location>
        <position position="191"/>
    </location>
    <ligand>
        <name>L-citrulline</name>
        <dbReference type="ChEBI" id="CHEBI:57743"/>
    </ligand>
</feature>
<feature type="binding site" evidence="1">
    <location>
        <position position="267"/>
    </location>
    <ligand>
        <name>L-citrulline</name>
        <dbReference type="ChEBI" id="CHEBI:57743"/>
    </ligand>
</feature>
<feature type="binding site" evidence="1">
    <location>
        <position position="279"/>
    </location>
    <ligand>
        <name>L-citrulline</name>
        <dbReference type="ChEBI" id="CHEBI:57743"/>
    </ligand>
</feature>
<keyword id="KW-0028">Amino-acid biosynthesis</keyword>
<keyword id="KW-0055">Arginine biosynthesis</keyword>
<keyword id="KW-0067">ATP-binding</keyword>
<keyword id="KW-0963">Cytoplasm</keyword>
<keyword id="KW-0436">Ligase</keyword>
<keyword id="KW-0547">Nucleotide-binding</keyword>
<comment type="catalytic activity">
    <reaction evidence="1">
        <text>L-citrulline + L-aspartate + ATP = 2-(N(omega)-L-arginino)succinate + AMP + diphosphate + H(+)</text>
        <dbReference type="Rhea" id="RHEA:10932"/>
        <dbReference type="ChEBI" id="CHEBI:15378"/>
        <dbReference type="ChEBI" id="CHEBI:29991"/>
        <dbReference type="ChEBI" id="CHEBI:30616"/>
        <dbReference type="ChEBI" id="CHEBI:33019"/>
        <dbReference type="ChEBI" id="CHEBI:57472"/>
        <dbReference type="ChEBI" id="CHEBI:57743"/>
        <dbReference type="ChEBI" id="CHEBI:456215"/>
        <dbReference type="EC" id="6.3.4.5"/>
    </reaction>
</comment>
<comment type="pathway">
    <text evidence="1">Amino-acid biosynthesis; L-arginine biosynthesis; L-arginine from L-ornithine and carbamoyl phosphate: step 2/3.</text>
</comment>
<comment type="subunit">
    <text evidence="1">Homotetramer.</text>
</comment>
<comment type="subcellular location">
    <subcellularLocation>
        <location evidence="1">Cytoplasm</location>
    </subcellularLocation>
</comment>
<comment type="similarity">
    <text evidence="1">Belongs to the argininosuccinate synthase family. Type 1 subfamily.</text>
</comment>
<reference key="1">
    <citation type="journal article" date="2000" name="J. Bacteriol.">
        <title>Evolution of arginine biosynthesis in the bacterial domain: novel gene-enzyme relationships from psychrophilic Moritella strains (Vibrionaceae) and evolutionary significance of N-alpha-acetyl ornithinase.</title>
        <authorList>
            <person name="Xu Y."/>
            <person name="Liang Z."/>
            <person name="Legrain C."/>
            <person name="Ruger H.J."/>
            <person name="Glansdorff N."/>
        </authorList>
    </citation>
    <scope>NUCLEOTIDE SEQUENCE [GENOMIC DNA]</scope>
    <source>
        <strain>2674</strain>
    </source>
</reference>
<accession>Q9K4Z3</accession>
<name>ASSY_MORPR</name>
<proteinExistence type="inferred from homology"/>
<dbReference type="EC" id="6.3.4.5" evidence="1"/>
<dbReference type="EMBL" id="AJ252020">
    <property type="protein sequence ID" value="CAB95017.1"/>
    <property type="molecule type" value="Genomic_DNA"/>
</dbReference>
<dbReference type="SMR" id="Q9K4Z3"/>
<dbReference type="UniPathway" id="UPA00068">
    <property type="reaction ID" value="UER00113"/>
</dbReference>
<dbReference type="GO" id="GO:0005737">
    <property type="term" value="C:cytoplasm"/>
    <property type="evidence" value="ECO:0007669"/>
    <property type="project" value="UniProtKB-SubCell"/>
</dbReference>
<dbReference type="GO" id="GO:0004055">
    <property type="term" value="F:argininosuccinate synthase activity"/>
    <property type="evidence" value="ECO:0007669"/>
    <property type="project" value="UniProtKB-UniRule"/>
</dbReference>
<dbReference type="GO" id="GO:0005524">
    <property type="term" value="F:ATP binding"/>
    <property type="evidence" value="ECO:0007669"/>
    <property type="project" value="UniProtKB-UniRule"/>
</dbReference>
<dbReference type="GO" id="GO:0000053">
    <property type="term" value="P:argininosuccinate metabolic process"/>
    <property type="evidence" value="ECO:0007669"/>
    <property type="project" value="TreeGrafter"/>
</dbReference>
<dbReference type="GO" id="GO:0006526">
    <property type="term" value="P:L-arginine biosynthetic process"/>
    <property type="evidence" value="ECO:0007669"/>
    <property type="project" value="UniProtKB-UniRule"/>
</dbReference>
<dbReference type="GO" id="GO:0000050">
    <property type="term" value="P:urea cycle"/>
    <property type="evidence" value="ECO:0007669"/>
    <property type="project" value="TreeGrafter"/>
</dbReference>
<dbReference type="CDD" id="cd01999">
    <property type="entry name" value="ASS"/>
    <property type="match status" value="1"/>
</dbReference>
<dbReference type="FunFam" id="3.40.50.620:FF:000019">
    <property type="entry name" value="Argininosuccinate synthase"/>
    <property type="match status" value="1"/>
</dbReference>
<dbReference type="FunFam" id="3.90.1260.10:FF:000007">
    <property type="entry name" value="Argininosuccinate synthase"/>
    <property type="match status" value="1"/>
</dbReference>
<dbReference type="Gene3D" id="3.90.1260.10">
    <property type="entry name" value="Argininosuccinate synthetase, chain A, domain 2"/>
    <property type="match status" value="1"/>
</dbReference>
<dbReference type="Gene3D" id="3.40.50.620">
    <property type="entry name" value="HUPs"/>
    <property type="match status" value="1"/>
</dbReference>
<dbReference type="Gene3D" id="1.20.5.470">
    <property type="entry name" value="Single helix bin"/>
    <property type="match status" value="1"/>
</dbReference>
<dbReference type="HAMAP" id="MF_00005">
    <property type="entry name" value="Arg_succ_synth_type1"/>
    <property type="match status" value="1"/>
</dbReference>
<dbReference type="InterPro" id="IPR048268">
    <property type="entry name" value="Arginosuc_syn_C"/>
</dbReference>
<dbReference type="InterPro" id="IPR048267">
    <property type="entry name" value="Arginosuc_syn_N"/>
</dbReference>
<dbReference type="InterPro" id="IPR001518">
    <property type="entry name" value="Arginosuc_synth"/>
</dbReference>
<dbReference type="InterPro" id="IPR018223">
    <property type="entry name" value="Arginosuc_synth_CS"/>
</dbReference>
<dbReference type="InterPro" id="IPR023434">
    <property type="entry name" value="Arginosuc_synth_type_1_subfam"/>
</dbReference>
<dbReference type="InterPro" id="IPR024074">
    <property type="entry name" value="AS_cat/multimer_dom_body"/>
</dbReference>
<dbReference type="InterPro" id="IPR014729">
    <property type="entry name" value="Rossmann-like_a/b/a_fold"/>
</dbReference>
<dbReference type="NCBIfam" id="TIGR00032">
    <property type="entry name" value="argG"/>
    <property type="match status" value="1"/>
</dbReference>
<dbReference type="NCBIfam" id="NF001770">
    <property type="entry name" value="PRK00509.1"/>
    <property type="match status" value="1"/>
</dbReference>
<dbReference type="PANTHER" id="PTHR11587">
    <property type="entry name" value="ARGININOSUCCINATE SYNTHASE"/>
    <property type="match status" value="1"/>
</dbReference>
<dbReference type="PANTHER" id="PTHR11587:SF2">
    <property type="entry name" value="ARGININOSUCCINATE SYNTHASE"/>
    <property type="match status" value="1"/>
</dbReference>
<dbReference type="Pfam" id="PF20979">
    <property type="entry name" value="Arginosuc_syn_C"/>
    <property type="match status" value="1"/>
</dbReference>
<dbReference type="Pfam" id="PF00764">
    <property type="entry name" value="Arginosuc_synth"/>
    <property type="match status" value="1"/>
</dbReference>
<dbReference type="SUPFAM" id="SSF52402">
    <property type="entry name" value="Adenine nucleotide alpha hydrolases-like"/>
    <property type="match status" value="1"/>
</dbReference>
<dbReference type="SUPFAM" id="SSF69864">
    <property type="entry name" value="Argininosuccinate synthetase, C-terminal domain"/>
    <property type="match status" value="1"/>
</dbReference>
<dbReference type="PROSITE" id="PS00564">
    <property type="entry name" value="ARGININOSUCCIN_SYN_1"/>
    <property type="match status" value="1"/>
</dbReference>
<dbReference type="PROSITE" id="PS00565">
    <property type="entry name" value="ARGININOSUCCIN_SYN_2"/>
    <property type="match status" value="1"/>
</dbReference>